<organism>
    <name type="scientific">Aquifex aeolicus (strain VF5)</name>
    <dbReference type="NCBI Taxonomy" id="224324"/>
    <lineage>
        <taxon>Bacteria</taxon>
        <taxon>Pseudomonadati</taxon>
        <taxon>Aquificota</taxon>
        <taxon>Aquificia</taxon>
        <taxon>Aquificales</taxon>
        <taxon>Aquificaceae</taxon>
        <taxon>Aquifex</taxon>
    </lineage>
</organism>
<gene>
    <name evidence="1" type="primary">gcvH2</name>
    <name type="ordered locus">aq_1657</name>
</gene>
<evidence type="ECO:0000255" key="1">
    <source>
        <dbReference type="HAMAP-Rule" id="MF_00272"/>
    </source>
</evidence>
<evidence type="ECO:0000255" key="2">
    <source>
        <dbReference type="PROSITE-ProRule" id="PRU01066"/>
    </source>
</evidence>
<name>GCSH2_AQUAE</name>
<feature type="chain" id="PRO_0000166198" description="Glycine cleavage system H protein 2">
    <location>
        <begin position="1"/>
        <end position="161"/>
    </location>
</feature>
<feature type="domain" description="Lipoyl-binding" evidence="2">
    <location>
        <begin position="34"/>
        <end position="116"/>
    </location>
</feature>
<feature type="modified residue" description="N6-lipoyllysine" evidence="1">
    <location>
        <position position="75"/>
    </location>
</feature>
<comment type="function">
    <text evidence="1">The glycine cleavage system catalyzes the degradation of glycine. The H protein shuttles the methylamine group of glycine from the P protein to the T protein.</text>
</comment>
<comment type="cofactor">
    <cofactor evidence="1">
        <name>(R)-lipoate</name>
        <dbReference type="ChEBI" id="CHEBI:83088"/>
    </cofactor>
    <text evidence="1">Binds 1 lipoyl cofactor covalently.</text>
</comment>
<comment type="subunit">
    <text evidence="1">The glycine cleavage system is composed of four proteins: P, T, L and H.</text>
</comment>
<comment type="similarity">
    <text evidence="1">Belongs to the GcvH family.</text>
</comment>
<dbReference type="EMBL" id="AE000657">
    <property type="protein sequence ID" value="AAC07539.1"/>
    <property type="molecule type" value="Genomic_DNA"/>
</dbReference>
<dbReference type="PIR" id="D70443">
    <property type="entry name" value="D70443"/>
</dbReference>
<dbReference type="RefSeq" id="NP_214139.1">
    <property type="nucleotide sequence ID" value="NC_000918.1"/>
</dbReference>
<dbReference type="RefSeq" id="WP_010881076.1">
    <property type="nucleotide sequence ID" value="NC_000918.1"/>
</dbReference>
<dbReference type="SMR" id="O67573"/>
<dbReference type="STRING" id="224324.aq_1657"/>
<dbReference type="EnsemblBacteria" id="AAC07539">
    <property type="protein sequence ID" value="AAC07539"/>
    <property type="gene ID" value="aq_1657"/>
</dbReference>
<dbReference type="KEGG" id="aae:aq_1657"/>
<dbReference type="PATRIC" id="fig|224324.8.peg.1279"/>
<dbReference type="eggNOG" id="COG0509">
    <property type="taxonomic scope" value="Bacteria"/>
</dbReference>
<dbReference type="HOGENOM" id="CLU_097408_2_2_0"/>
<dbReference type="InParanoid" id="O67573"/>
<dbReference type="OrthoDB" id="13943at2"/>
<dbReference type="Proteomes" id="UP000000798">
    <property type="component" value="Chromosome"/>
</dbReference>
<dbReference type="GO" id="GO:0005829">
    <property type="term" value="C:cytosol"/>
    <property type="evidence" value="ECO:0000318"/>
    <property type="project" value="GO_Central"/>
</dbReference>
<dbReference type="GO" id="GO:0005960">
    <property type="term" value="C:glycine cleavage complex"/>
    <property type="evidence" value="ECO:0007669"/>
    <property type="project" value="InterPro"/>
</dbReference>
<dbReference type="GO" id="GO:0019464">
    <property type="term" value="P:glycine decarboxylation via glycine cleavage system"/>
    <property type="evidence" value="ECO:0007669"/>
    <property type="project" value="UniProtKB-UniRule"/>
</dbReference>
<dbReference type="CDD" id="cd06848">
    <property type="entry name" value="GCS_H"/>
    <property type="match status" value="1"/>
</dbReference>
<dbReference type="Gene3D" id="2.40.50.100">
    <property type="match status" value="1"/>
</dbReference>
<dbReference type="HAMAP" id="MF_00272">
    <property type="entry name" value="GcvH"/>
    <property type="match status" value="1"/>
</dbReference>
<dbReference type="InterPro" id="IPR003016">
    <property type="entry name" value="2-oxoA_DH_lipoyl-BS"/>
</dbReference>
<dbReference type="InterPro" id="IPR000089">
    <property type="entry name" value="Biotin_lipoyl"/>
</dbReference>
<dbReference type="InterPro" id="IPR002930">
    <property type="entry name" value="GCV_H"/>
</dbReference>
<dbReference type="InterPro" id="IPR033753">
    <property type="entry name" value="GCV_H/Fam206"/>
</dbReference>
<dbReference type="InterPro" id="IPR011053">
    <property type="entry name" value="Single_hybrid_motif"/>
</dbReference>
<dbReference type="NCBIfam" id="NF002270">
    <property type="entry name" value="PRK01202.1"/>
    <property type="match status" value="1"/>
</dbReference>
<dbReference type="PANTHER" id="PTHR11715">
    <property type="entry name" value="GLYCINE CLEAVAGE SYSTEM H PROTEIN"/>
    <property type="match status" value="1"/>
</dbReference>
<dbReference type="PANTHER" id="PTHR11715:SF3">
    <property type="entry name" value="GLYCINE CLEAVAGE SYSTEM H PROTEIN-RELATED"/>
    <property type="match status" value="1"/>
</dbReference>
<dbReference type="Pfam" id="PF01597">
    <property type="entry name" value="GCV_H"/>
    <property type="match status" value="1"/>
</dbReference>
<dbReference type="SUPFAM" id="SSF51230">
    <property type="entry name" value="Single hybrid motif"/>
    <property type="match status" value="1"/>
</dbReference>
<dbReference type="PROSITE" id="PS50968">
    <property type="entry name" value="BIOTINYL_LIPOYL"/>
    <property type="match status" value="1"/>
</dbReference>
<dbReference type="PROSITE" id="PS00189">
    <property type="entry name" value="LIPOYL"/>
    <property type="match status" value="1"/>
</dbReference>
<protein>
    <recommendedName>
        <fullName evidence="1">Glycine cleavage system H protein 2</fullName>
    </recommendedName>
</protein>
<accession>O67573</accession>
<reference key="1">
    <citation type="journal article" date="1998" name="Nature">
        <title>The complete genome of the hyperthermophilic bacterium Aquifex aeolicus.</title>
        <authorList>
            <person name="Deckert G."/>
            <person name="Warren P.V."/>
            <person name="Gaasterland T."/>
            <person name="Young W.G."/>
            <person name="Lenox A.L."/>
            <person name="Graham D.E."/>
            <person name="Overbeek R."/>
            <person name="Snead M.A."/>
            <person name="Keller M."/>
            <person name="Aujay M."/>
            <person name="Huber R."/>
            <person name="Feldman R.A."/>
            <person name="Short J.M."/>
            <person name="Olsen G.J."/>
            <person name="Swanson R.V."/>
        </authorList>
    </citation>
    <scope>NUCLEOTIDE SEQUENCE [LARGE SCALE GENOMIC DNA]</scope>
    <source>
        <strain>VF5</strain>
    </source>
</reference>
<proteinExistence type="inferred from homology"/>
<sequence length="161" mass="18227">MAEKVEEYRGCVIPKDLYYDIENQVWFKVNEDGTVTVGVTDIGQARAGKIINIRIKPPGKYVKKGKPVASLESGKWAGPVPADIEGEVVERNEKLFDKPDLINEDPYGEGWIAKLKPANLERDLQDLVTGEEAVQKLKEYIEREDVNCGEERAQISKKFYK</sequence>
<keyword id="KW-0450">Lipoyl</keyword>
<keyword id="KW-1185">Reference proteome</keyword>